<proteinExistence type="inferred from homology"/>
<name>ILVC_STRS2</name>
<reference key="1">
    <citation type="journal article" date="2007" name="PLoS ONE">
        <title>A glimpse of streptococcal toxic shock syndrome from comparative genomics of S. suis 2 Chinese isolates.</title>
        <authorList>
            <person name="Chen C."/>
            <person name="Tang J."/>
            <person name="Dong W."/>
            <person name="Wang C."/>
            <person name="Feng Y."/>
            <person name="Wang J."/>
            <person name="Zheng F."/>
            <person name="Pan X."/>
            <person name="Liu D."/>
            <person name="Li M."/>
            <person name="Song Y."/>
            <person name="Zhu X."/>
            <person name="Sun H."/>
            <person name="Feng T."/>
            <person name="Guo Z."/>
            <person name="Ju A."/>
            <person name="Ge J."/>
            <person name="Dong Y."/>
            <person name="Sun W."/>
            <person name="Jiang Y."/>
            <person name="Wang J."/>
            <person name="Yan J."/>
            <person name="Yang H."/>
            <person name="Wang X."/>
            <person name="Gao G.F."/>
            <person name="Yang R."/>
            <person name="Wang J."/>
            <person name="Yu J."/>
        </authorList>
    </citation>
    <scope>NUCLEOTIDE SEQUENCE [LARGE SCALE GENOMIC DNA]</scope>
    <source>
        <strain>98HAH33</strain>
    </source>
</reference>
<dbReference type="EC" id="1.1.1.86" evidence="1"/>
<dbReference type="EMBL" id="CP000408">
    <property type="protein sequence ID" value="ABP93047.1"/>
    <property type="molecule type" value="Genomic_DNA"/>
</dbReference>
<dbReference type="SMR" id="A4W3V8"/>
<dbReference type="KEGG" id="ssv:SSU98_1889"/>
<dbReference type="HOGENOM" id="CLU_033821_0_1_9"/>
<dbReference type="UniPathway" id="UPA00047">
    <property type="reaction ID" value="UER00056"/>
</dbReference>
<dbReference type="UniPathway" id="UPA00049">
    <property type="reaction ID" value="UER00060"/>
</dbReference>
<dbReference type="GO" id="GO:0005829">
    <property type="term" value="C:cytosol"/>
    <property type="evidence" value="ECO:0007669"/>
    <property type="project" value="TreeGrafter"/>
</dbReference>
<dbReference type="GO" id="GO:0004455">
    <property type="term" value="F:ketol-acid reductoisomerase activity"/>
    <property type="evidence" value="ECO:0007669"/>
    <property type="project" value="UniProtKB-UniRule"/>
</dbReference>
<dbReference type="GO" id="GO:0000287">
    <property type="term" value="F:magnesium ion binding"/>
    <property type="evidence" value="ECO:0007669"/>
    <property type="project" value="UniProtKB-UniRule"/>
</dbReference>
<dbReference type="GO" id="GO:0050661">
    <property type="term" value="F:NADP binding"/>
    <property type="evidence" value="ECO:0007669"/>
    <property type="project" value="InterPro"/>
</dbReference>
<dbReference type="GO" id="GO:0009097">
    <property type="term" value="P:isoleucine biosynthetic process"/>
    <property type="evidence" value="ECO:0007669"/>
    <property type="project" value="UniProtKB-UniRule"/>
</dbReference>
<dbReference type="GO" id="GO:0009099">
    <property type="term" value="P:L-valine biosynthetic process"/>
    <property type="evidence" value="ECO:0007669"/>
    <property type="project" value="UniProtKB-UniRule"/>
</dbReference>
<dbReference type="FunFam" id="3.40.50.720:FF:000023">
    <property type="entry name" value="Ketol-acid reductoisomerase (NADP(+))"/>
    <property type="match status" value="1"/>
</dbReference>
<dbReference type="Gene3D" id="6.10.240.10">
    <property type="match status" value="1"/>
</dbReference>
<dbReference type="Gene3D" id="3.40.50.720">
    <property type="entry name" value="NAD(P)-binding Rossmann-like Domain"/>
    <property type="match status" value="1"/>
</dbReference>
<dbReference type="HAMAP" id="MF_00435">
    <property type="entry name" value="IlvC"/>
    <property type="match status" value="1"/>
</dbReference>
<dbReference type="InterPro" id="IPR008927">
    <property type="entry name" value="6-PGluconate_DH-like_C_sf"/>
</dbReference>
<dbReference type="InterPro" id="IPR013023">
    <property type="entry name" value="KARI"/>
</dbReference>
<dbReference type="InterPro" id="IPR000506">
    <property type="entry name" value="KARI_C"/>
</dbReference>
<dbReference type="InterPro" id="IPR013116">
    <property type="entry name" value="KARI_N"/>
</dbReference>
<dbReference type="InterPro" id="IPR014359">
    <property type="entry name" value="KARI_prok"/>
</dbReference>
<dbReference type="InterPro" id="IPR036291">
    <property type="entry name" value="NAD(P)-bd_dom_sf"/>
</dbReference>
<dbReference type="NCBIfam" id="TIGR00465">
    <property type="entry name" value="ilvC"/>
    <property type="match status" value="1"/>
</dbReference>
<dbReference type="NCBIfam" id="NF004017">
    <property type="entry name" value="PRK05479.1"/>
    <property type="match status" value="1"/>
</dbReference>
<dbReference type="NCBIfam" id="NF009940">
    <property type="entry name" value="PRK13403.1"/>
    <property type="match status" value="1"/>
</dbReference>
<dbReference type="PANTHER" id="PTHR21371">
    <property type="entry name" value="KETOL-ACID REDUCTOISOMERASE, MITOCHONDRIAL"/>
    <property type="match status" value="1"/>
</dbReference>
<dbReference type="PANTHER" id="PTHR21371:SF1">
    <property type="entry name" value="KETOL-ACID REDUCTOISOMERASE, MITOCHONDRIAL"/>
    <property type="match status" value="1"/>
</dbReference>
<dbReference type="Pfam" id="PF01450">
    <property type="entry name" value="KARI_C"/>
    <property type="match status" value="1"/>
</dbReference>
<dbReference type="Pfam" id="PF07991">
    <property type="entry name" value="KARI_N"/>
    <property type="match status" value="1"/>
</dbReference>
<dbReference type="PIRSF" id="PIRSF000116">
    <property type="entry name" value="IlvC_gammaproteo"/>
    <property type="match status" value="1"/>
</dbReference>
<dbReference type="SUPFAM" id="SSF48179">
    <property type="entry name" value="6-phosphogluconate dehydrogenase C-terminal domain-like"/>
    <property type="match status" value="1"/>
</dbReference>
<dbReference type="SUPFAM" id="SSF51735">
    <property type="entry name" value="NAD(P)-binding Rossmann-fold domains"/>
    <property type="match status" value="1"/>
</dbReference>
<dbReference type="PROSITE" id="PS51851">
    <property type="entry name" value="KARI_C"/>
    <property type="match status" value="1"/>
</dbReference>
<dbReference type="PROSITE" id="PS51850">
    <property type="entry name" value="KARI_N"/>
    <property type="match status" value="1"/>
</dbReference>
<comment type="function">
    <text evidence="1">Involved in the biosynthesis of branched-chain amino acids (BCAA). Catalyzes an alkyl-migration followed by a ketol-acid reduction of (S)-2-acetolactate (S2AL) to yield (R)-2,3-dihydroxy-isovalerate. In the isomerase reaction, S2AL is rearranged via a Mg-dependent methyl migration to produce 3-hydroxy-3-methyl-2-ketobutyrate (HMKB). In the reductase reaction, this 2-ketoacid undergoes a metal-dependent reduction by NADPH to yield (R)-2,3-dihydroxy-isovalerate.</text>
</comment>
<comment type="catalytic activity">
    <reaction evidence="1">
        <text>(2R)-2,3-dihydroxy-3-methylbutanoate + NADP(+) = (2S)-2-acetolactate + NADPH + H(+)</text>
        <dbReference type="Rhea" id="RHEA:22068"/>
        <dbReference type="ChEBI" id="CHEBI:15378"/>
        <dbReference type="ChEBI" id="CHEBI:49072"/>
        <dbReference type="ChEBI" id="CHEBI:57783"/>
        <dbReference type="ChEBI" id="CHEBI:58349"/>
        <dbReference type="ChEBI" id="CHEBI:58476"/>
        <dbReference type="EC" id="1.1.1.86"/>
    </reaction>
</comment>
<comment type="catalytic activity">
    <reaction evidence="1">
        <text>(2R,3R)-2,3-dihydroxy-3-methylpentanoate + NADP(+) = (S)-2-ethyl-2-hydroxy-3-oxobutanoate + NADPH + H(+)</text>
        <dbReference type="Rhea" id="RHEA:13493"/>
        <dbReference type="ChEBI" id="CHEBI:15378"/>
        <dbReference type="ChEBI" id="CHEBI:49256"/>
        <dbReference type="ChEBI" id="CHEBI:49258"/>
        <dbReference type="ChEBI" id="CHEBI:57783"/>
        <dbReference type="ChEBI" id="CHEBI:58349"/>
        <dbReference type="EC" id="1.1.1.86"/>
    </reaction>
</comment>
<comment type="cofactor">
    <cofactor evidence="1">
        <name>Mg(2+)</name>
        <dbReference type="ChEBI" id="CHEBI:18420"/>
    </cofactor>
    <text evidence="1">Binds 2 magnesium ions per subunit.</text>
</comment>
<comment type="pathway">
    <text evidence="1">Amino-acid biosynthesis; L-isoleucine biosynthesis; L-isoleucine from 2-oxobutanoate: step 2/4.</text>
</comment>
<comment type="pathway">
    <text evidence="1">Amino-acid biosynthesis; L-valine biosynthesis; L-valine from pyruvate: step 2/4.</text>
</comment>
<comment type="similarity">
    <text evidence="1">Belongs to the ketol-acid reductoisomerase family.</text>
</comment>
<protein>
    <recommendedName>
        <fullName evidence="1">Ketol-acid reductoisomerase (NADP(+))</fullName>
        <shortName evidence="1">KARI</shortName>
        <ecNumber evidence="1">1.1.1.86</ecNumber>
    </recommendedName>
    <alternativeName>
        <fullName evidence="1">Acetohydroxy-acid isomeroreductase</fullName>
        <shortName evidence="1">AHIR</shortName>
    </alternativeName>
    <alternativeName>
        <fullName evidence="1">Alpha-keto-beta-hydroxylacyl reductoisomerase</fullName>
    </alternativeName>
    <alternativeName>
        <fullName evidence="1">Ketol-acid reductoisomerase type 1</fullName>
    </alternativeName>
    <alternativeName>
        <fullName evidence="1">Ketol-acid reductoisomerase type I</fullName>
    </alternativeName>
</protein>
<keyword id="KW-0028">Amino-acid biosynthesis</keyword>
<keyword id="KW-0100">Branched-chain amino acid biosynthesis</keyword>
<keyword id="KW-0460">Magnesium</keyword>
<keyword id="KW-0479">Metal-binding</keyword>
<keyword id="KW-0521">NADP</keyword>
<keyword id="KW-0560">Oxidoreductase</keyword>
<sequence>MTVTMQYEKDVTVAALDGKRIAVIGYGSQGHAHAQNLRDTGHDVIIGVRAGKSFDKAKEDGFETFEVAEAAKQADVIMILAPDEIQADLYNEEIAPNLEAGNALGFAHGFNVHFEFIKVPADVDVFMCAPKGPGHLVRRTFEEGFGVPALYAVYQDATGNAKHIAMDWAKGVGSARVGLLETTFKEETEEDLFGEQAVLCGGLTALMQAGFEVLTEAGYAPELAYFEVLHEMKLIVDLVYEGGFKKMRQSISNTAEFGDYVSGPRVITDQVKENMKAVLADIQSGKFANDFVNDYKAGRPRMEAYRKEAENLEIEKVGAELRKAMPFVGRNDDDAFKIYN</sequence>
<feature type="chain" id="PRO_1000050579" description="Ketol-acid reductoisomerase (NADP(+))">
    <location>
        <begin position="1"/>
        <end position="340"/>
    </location>
</feature>
<feature type="domain" description="KARI N-terminal Rossmann" evidence="2">
    <location>
        <begin position="1"/>
        <end position="182"/>
    </location>
</feature>
<feature type="domain" description="KARI C-terminal knotted" evidence="3">
    <location>
        <begin position="183"/>
        <end position="328"/>
    </location>
</feature>
<feature type="active site" evidence="1">
    <location>
        <position position="108"/>
    </location>
</feature>
<feature type="binding site" evidence="1">
    <location>
        <begin position="26"/>
        <end position="29"/>
    </location>
    <ligand>
        <name>NADP(+)</name>
        <dbReference type="ChEBI" id="CHEBI:58349"/>
    </ligand>
</feature>
<feature type="binding site" evidence="1">
    <location>
        <position position="49"/>
    </location>
    <ligand>
        <name>NADP(+)</name>
        <dbReference type="ChEBI" id="CHEBI:58349"/>
    </ligand>
</feature>
<feature type="binding site" evidence="1">
    <location>
        <position position="53"/>
    </location>
    <ligand>
        <name>NADP(+)</name>
        <dbReference type="ChEBI" id="CHEBI:58349"/>
    </ligand>
</feature>
<feature type="binding site" evidence="1">
    <location>
        <begin position="83"/>
        <end position="86"/>
    </location>
    <ligand>
        <name>NADP(+)</name>
        <dbReference type="ChEBI" id="CHEBI:58349"/>
    </ligand>
</feature>
<feature type="binding site" evidence="1">
    <location>
        <position position="134"/>
    </location>
    <ligand>
        <name>NADP(+)</name>
        <dbReference type="ChEBI" id="CHEBI:58349"/>
    </ligand>
</feature>
<feature type="binding site" evidence="1">
    <location>
        <position position="191"/>
    </location>
    <ligand>
        <name>Mg(2+)</name>
        <dbReference type="ChEBI" id="CHEBI:18420"/>
        <label>1</label>
    </ligand>
</feature>
<feature type="binding site" evidence="1">
    <location>
        <position position="191"/>
    </location>
    <ligand>
        <name>Mg(2+)</name>
        <dbReference type="ChEBI" id="CHEBI:18420"/>
        <label>2</label>
    </ligand>
</feature>
<feature type="binding site" evidence="1">
    <location>
        <position position="195"/>
    </location>
    <ligand>
        <name>Mg(2+)</name>
        <dbReference type="ChEBI" id="CHEBI:18420"/>
        <label>1</label>
    </ligand>
</feature>
<feature type="binding site" evidence="1">
    <location>
        <position position="227"/>
    </location>
    <ligand>
        <name>Mg(2+)</name>
        <dbReference type="ChEBI" id="CHEBI:18420"/>
        <label>2</label>
    </ligand>
</feature>
<feature type="binding site" evidence="1">
    <location>
        <position position="231"/>
    </location>
    <ligand>
        <name>Mg(2+)</name>
        <dbReference type="ChEBI" id="CHEBI:18420"/>
        <label>2</label>
    </ligand>
</feature>
<feature type="binding site" evidence="1">
    <location>
        <position position="252"/>
    </location>
    <ligand>
        <name>substrate</name>
    </ligand>
</feature>
<evidence type="ECO:0000255" key="1">
    <source>
        <dbReference type="HAMAP-Rule" id="MF_00435"/>
    </source>
</evidence>
<evidence type="ECO:0000255" key="2">
    <source>
        <dbReference type="PROSITE-ProRule" id="PRU01197"/>
    </source>
</evidence>
<evidence type="ECO:0000255" key="3">
    <source>
        <dbReference type="PROSITE-ProRule" id="PRU01198"/>
    </source>
</evidence>
<gene>
    <name evidence="1" type="primary">ilvC</name>
    <name type="ordered locus">SSU98_1889</name>
</gene>
<accession>A4W3V8</accession>
<organism>
    <name type="scientific">Streptococcus suis (strain 98HAH33)</name>
    <dbReference type="NCBI Taxonomy" id="391296"/>
    <lineage>
        <taxon>Bacteria</taxon>
        <taxon>Bacillati</taxon>
        <taxon>Bacillota</taxon>
        <taxon>Bacilli</taxon>
        <taxon>Lactobacillales</taxon>
        <taxon>Streptococcaceae</taxon>
        <taxon>Streptococcus</taxon>
    </lineage>
</organism>